<comment type="function">
    <text evidence="1">Involved in protein export. Acts as a chaperone by maintaining the newly synthesized protein in an open conformation. Functions as a peptidyl-prolyl cis-trans isomerase.</text>
</comment>
<comment type="catalytic activity">
    <reaction evidence="1">
        <text>[protein]-peptidylproline (omega=180) = [protein]-peptidylproline (omega=0)</text>
        <dbReference type="Rhea" id="RHEA:16237"/>
        <dbReference type="Rhea" id="RHEA-COMP:10747"/>
        <dbReference type="Rhea" id="RHEA-COMP:10748"/>
        <dbReference type="ChEBI" id="CHEBI:83833"/>
        <dbReference type="ChEBI" id="CHEBI:83834"/>
        <dbReference type="EC" id="5.2.1.8"/>
    </reaction>
</comment>
<comment type="subcellular location">
    <subcellularLocation>
        <location>Cytoplasm</location>
    </subcellularLocation>
    <text evidence="1">About half TF is bound to the ribosome near the polypeptide exit tunnel while the other half is free in the cytoplasm.</text>
</comment>
<comment type="domain">
    <text evidence="1">Consists of 3 domains; the N-terminus binds the ribosome, the middle domain has PPIase activity, while the C-terminus has intrinsic chaperone activity on its own.</text>
</comment>
<comment type="similarity">
    <text evidence="1">Belongs to the FKBP-type PPIase family. Tig subfamily.</text>
</comment>
<gene>
    <name evidence="1" type="primary">tig</name>
    <name type="ordered locus">ROP_10890</name>
</gene>
<protein>
    <recommendedName>
        <fullName evidence="1">Trigger factor</fullName>
        <shortName evidence="1">TF</shortName>
        <ecNumber evidence="1">5.2.1.8</ecNumber>
    </recommendedName>
    <alternativeName>
        <fullName evidence="1">PPIase</fullName>
    </alternativeName>
</protein>
<name>TIG_RHOOB</name>
<organism>
    <name type="scientific">Rhodococcus opacus (strain B4)</name>
    <dbReference type="NCBI Taxonomy" id="632772"/>
    <lineage>
        <taxon>Bacteria</taxon>
        <taxon>Bacillati</taxon>
        <taxon>Actinomycetota</taxon>
        <taxon>Actinomycetes</taxon>
        <taxon>Mycobacteriales</taxon>
        <taxon>Nocardiaceae</taxon>
        <taxon>Rhodococcus</taxon>
    </lineage>
</organism>
<keyword id="KW-0131">Cell cycle</keyword>
<keyword id="KW-0132">Cell division</keyword>
<keyword id="KW-0143">Chaperone</keyword>
<keyword id="KW-0963">Cytoplasm</keyword>
<keyword id="KW-0413">Isomerase</keyword>
<keyword id="KW-0697">Rotamase</keyword>
<reference key="1">
    <citation type="submission" date="2009-03" db="EMBL/GenBank/DDBJ databases">
        <title>Comparison of the complete genome sequences of Rhodococcus erythropolis PR4 and Rhodococcus opacus B4.</title>
        <authorList>
            <person name="Takarada H."/>
            <person name="Sekine M."/>
            <person name="Hosoyama A."/>
            <person name="Yamada R."/>
            <person name="Fujisawa T."/>
            <person name="Omata S."/>
            <person name="Shimizu A."/>
            <person name="Tsukatani N."/>
            <person name="Tanikawa S."/>
            <person name="Fujita N."/>
            <person name="Harayama S."/>
        </authorList>
    </citation>
    <scope>NUCLEOTIDE SEQUENCE [LARGE SCALE GENOMIC DNA]</scope>
    <source>
        <strain>B4</strain>
    </source>
</reference>
<evidence type="ECO:0000255" key="1">
    <source>
        <dbReference type="HAMAP-Rule" id="MF_00303"/>
    </source>
</evidence>
<evidence type="ECO:0000256" key="2">
    <source>
        <dbReference type="SAM" id="MobiDB-lite"/>
    </source>
</evidence>
<feature type="chain" id="PRO_1000198173" description="Trigger factor">
    <location>
        <begin position="1"/>
        <end position="464"/>
    </location>
</feature>
<feature type="domain" description="PPIase FKBP-type" evidence="1">
    <location>
        <begin position="162"/>
        <end position="243"/>
    </location>
</feature>
<feature type="region of interest" description="Disordered" evidence="2">
    <location>
        <begin position="428"/>
        <end position="464"/>
    </location>
</feature>
<proteinExistence type="inferred from homology"/>
<dbReference type="EC" id="5.2.1.8" evidence="1"/>
<dbReference type="EMBL" id="AP011115">
    <property type="protein sequence ID" value="BAH49336.1"/>
    <property type="molecule type" value="Genomic_DNA"/>
</dbReference>
<dbReference type="RefSeq" id="WP_012688317.1">
    <property type="nucleotide sequence ID" value="NC_012522.1"/>
</dbReference>
<dbReference type="SMR" id="C1AVQ6"/>
<dbReference type="STRING" id="632772.ROP_10890"/>
<dbReference type="KEGG" id="rop:ROP_10890"/>
<dbReference type="PATRIC" id="fig|632772.20.peg.1158"/>
<dbReference type="HOGENOM" id="CLU_033058_3_0_11"/>
<dbReference type="OrthoDB" id="9767721at2"/>
<dbReference type="Proteomes" id="UP000002212">
    <property type="component" value="Chromosome"/>
</dbReference>
<dbReference type="GO" id="GO:0005737">
    <property type="term" value="C:cytoplasm"/>
    <property type="evidence" value="ECO:0007669"/>
    <property type="project" value="UniProtKB-SubCell"/>
</dbReference>
<dbReference type="GO" id="GO:0003755">
    <property type="term" value="F:peptidyl-prolyl cis-trans isomerase activity"/>
    <property type="evidence" value="ECO:0007669"/>
    <property type="project" value="UniProtKB-UniRule"/>
</dbReference>
<dbReference type="GO" id="GO:0044183">
    <property type="term" value="F:protein folding chaperone"/>
    <property type="evidence" value="ECO:0007669"/>
    <property type="project" value="TreeGrafter"/>
</dbReference>
<dbReference type="GO" id="GO:0043022">
    <property type="term" value="F:ribosome binding"/>
    <property type="evidence" value="ECO:0007669"/>
    <property type="project" value="TreeGrafter"/>
</dbReference>
<dbReference type="GO" id="GO:0051083">
    <property type="term" value="P:'de novo' cotranslational protein folding"/>
    <property type="evidence" value="ECO:0007669"/>
    <property type="project" value="TreeGrafter"/>
</dbReference>
<dbReference type="GO" id="GO:0051301">
    <property type="term" value="P:cell division"/>
    <property type="evidence" value="ECO:0007669"/>
    <property type="project" value="UniProtKB-KW"/>
</dbReference>
<dbReference type="GO" id="GO:0061077">
    <property type="term" value="P:chaperone-mediated protein folding"/>
    <property type="evidence" value="ECO:0007669"/>
    <property type="project" value="TreeGrafter"/>
</dbReference>
<dbReference type="GO" id="GO:0015031">
    <property type="term" value="P:protein transport"/>
    <property type="evidence" value="ECO:0007669"/>
    <property type="project" value="UniProtKB-UniRule"/>
</dbReference>
<dbReference type="GO" id="GO:0043335">
    <property type="term" value="P:protein unfolding"/>
    <property type="evidence" value="ECO:0007669"/>
    <property type="project" value="TreeGrafter"/>
</dbReference>
<dbReference type="FunFam" id="3.10.50.40:FF:000019">
    <property type="entry name" value="Trigger factor"/>
    <property type="match status" value="1"/>
</dbReference>
<dbReference type="Gene3D" id="3.10.50.40">
    <property type="match status" value="1"/>
</dbReference>
<dbReference type="Gene3D" id="3.30.70.1050">
    <property type="entry name" value="Trigger factor ribosome-binding domain"/>
    <property type="match status" value="1"/>
</dbReference>
<dbReference type="Gene3D" id="1.10.3120.10">
    <property type="entry name" value="Trigger factor, C-terminal domain"/>
    <property type="match status" value="1"/>
</dbReference>
<dbReference type="HAMAP" id="MF_00303">
    <property type="entry name" value="Trigger_factor_Tig"/>
    <property type="match status" value="1"/>
</dbReference>
<dbReference type="InterPro" id="IPR046357">
    <property type="entry name" value="PPIase_dom_sf"/>
</dbReference>
<dbReference type="InterPro" id="IPR001179">
    <property type="entry name" value="PPIase_FKBP_dom"/>
</dbReference>
<dbReference type="InterPro" id="IPR005215">
    <property type="entry name" value="Trig_fac"/>
</dbReference>
<dbReference type="InterPro" id="IPR008880">
    <property type="entry name" value="Trigger_fac_C"/>
</dbReference>
<dbReference type="InterPro" id="IPR037041">
    <property type="entry name" value="Trigger_fac_C_sf"/>
</dbReference>
<dbReference type="InterPro" id="IPR008881">
    <property type="entry name" value="Trigger_fac_ribosome-bd_bac"/>
</dbReference>
<dbReference type="InterPro" id="IPR036611">
    <property type="entry name" value="Trigger_fac_ribosome-bd_sf"/>
</dbReference>
<dbReference type="InterPro" id="IPR027304">
    <property type="entry name" value="Trigger_fact/SurA_dom_sf"/>
</dbReference>
<dbReference type="NCBIfam" id="TIGR00115">
    <property type="entry name" value="tig"/>
    <property type="match status" value="1"/>
</dbReference>
<dbReference type="PANTHER" id="PTHR30560">
    <property type="entry name" value="TRIGGER FACTOR CHAPERONE AND PEPTIDYL-PROLYL CIS/TRANS ISOMERASE"/>
    <property type="match status" value="1"/>
</dbReference>
<dbReference type="PANTHER" id="PTHR30560:SF3">
    <property type="entry name" value="TRIGGER FACTOR-LIKE PROTEIN TIG, CHLOROPLASTIC"/>
    <property type="match status" value="1"/>
</dbReference>
<dbReference type="Pfam" id="PF00254">
    <property type="entry name" value="FKBP_C"/>
    <property type="match status" value="1"/>
</dbReference>
<dbReference type="Pfam" id="PF05698">
    <property type="entry name" value="Trigger_C"/>
    <property type="match status" value="1"/>
</dbReference>
<dbReference type="Pfam" id="PF05697">
    <property type="entry name" value="Trigger_N"/>
    <property type="match status" value="1"/>
</dbReference>
<dbReference type="PIRSF" id="PIRSF003095">
    <property type="entry name" value="Trigger_factor"/>
    <property type="match status" value="1"/>
</dbReference>
<dbReference type="SUPFAM" id="SSF54534">
    <property type="entry name" value="FKBP-like"/>
    <property type="match status" value="1"/>
</dbReference>
<dbReference type="SUPFAM" id="SSF109998">
    <property type="entry name" value="Triger factor/SurA peptide-binding domain-like"/>
    <property type="match status" value="1"/>
</dbReference>
<dbReference type="SUPFAM" id="SSF102735">
    <property type="entry name" value="Trigger factor ribosome-binding domain"/>
    <property type="match status" value="1"/>
</dbReference>
<dbReference type="PROSITE" id="PS50059">
    <property type="entry name" value="FKBP_PPIASE"/>
    <property type="match status" value="1"/>
</dbReference>
<accession>C1AVQ6</accession>
<sequence>MKSTVEQLSPTRVRINVEVPFEELKPDFDKAYKALAQQIRLPGFRPGKAPAKLLEARVGRGAVLEQVVNDALPSRYSEAVTSASVKAIGQPEIEITKIEDGELLEFTAEVDVRPEITLPDYSELSVTVDPIEITDEAVEEQLLSLRQRFGTLTGVERAVEDGDFISIDLSATVDGEAVPEATASGLSHEVGSGQLIEGLDEAVVGVKAGESKEFTSTLVAGDHAGKEAVVTVTVGTVKERELPAEDDEFAQLASEFDTLDELKADLRERVGRVRKVEQAGQIRDKVLETLLETVEVPLPEAVVKAEVDAALHDAVHGLDHDEDALNKLLEEQGTSREEFDKDAKDSAERSVKTQLLLDAIADASDVTVGQDELTERILFQAQRYGMAPEQFIQQIQQAGQLGAVFADVRRGKALAGVVEQATVTDTSGASVDTAELFGNGEADTEEAASTDEVASDSAEGEDQK</sequence>